<sequence length="113" mass="12902">MKITLSKRIDLLAFLLPCALALSTTVHAETNKLVIESGDSAQSRQHAAMEKEQWNDTGNLRQKVNKRTEKEWDKADAAFDNRDKCEQSANINAYWEPNTLRCLDRRTGRVITP</sequence>
<comment type="similarity">
    <text evidence="1">Belongs to the UPF0482 family.</text>
</comment>
<organism>
    <name type="scientific">Escherichia coli O157:H7 (strain EC4115 / EHEC)</name>
    <dbReference type="NCBI Taxonomy" id="444450"/>
    <lineage>
        <taxon>Bacteria</taxon>
        <taxon>Pseudomonadati</taxon>
        <taxon>Pseudomonadota</taxon>
        <taxon>Gammaproteobacteria</taxon>
        <taxon>Enterobacterales</taxon>
        <taxon>Enterobacteriaceae</taxon>
        <taxon>Escherichia</taxon>
    </lineage>
</organism>
<evidence type="ECO:0000255" key="1">
    <source>
        <dbReference type="HAMAP-Rule" id="MF_01581"/>
    </source>
</evidence>
<accession>B5Z418</accession>
<protein>
    <recommendedName>
        <fullName evidence="1">UPF0482 protein YnfB</fullName>
    </recommendedName>
</protein>
<keyword id="KW-0732">Signal</keyword>
<dbReference type="EMBL" id="CP001164">
    <property type="protein sequence ID" value="ACI36850.1"/>
    <property type="molecule type" value="Genomic_DNA"/>
</dbReference>
<dbReference type="RefSeq" id="WP_000705189.1">
    <property type="nucleotide sequence ID" value="NC_011353.1"/>
</dbReference>
<dbReference type="KEGG" id="ecf:ECH74115_2292"/>
<dbReference type="HOGENOM" id="CLU_167574_0_0_6"/>
<dbReference type="HAMAP" id="MF_01581">
    <property type="entry name" value="UPF0482"/>
    <property type="match status" value="1"/>
</dbReference>
<dbReference type="InterPro" id="IPR009700">
    <property type="entry name" value="DUF1283"/>
</dbReference>
<dbReference type="NCBIfam" id="NF010180">
    <property type="entry name" value="PRK13659.1"/>
    <property type="match status" value="1"/>
</dbReference>
<dbReference type="Pfam" id="PF06932">
    <property type="entry name" value="DUF1283"/>
    <property type="match status" value="1"/>
</dbReference>
<feature type="signal peptide" evidence="1">
    <location>
        <begin position="1"/>
        <end position="28"/>
    </location>
</feature>
<feature type="chain" id="PRO_1000200998" description="UPF0482 protein YnfB">
    <location>
        <begin position="29"/>
        <end position="113"/>
    </location>
</feature>
<reference key="1">
    <citation type="journal article" date="2011" name="Proc. Natl. Acad. Sci. U.S.A.">
        <title>Genomic anatomy of Escherichia coli O157:H7 outbreaks.</title>
        <authorList>
            <person name="Eppinger M."/>
            <person name="Mammel M.K."/>
            <person name="Leclerc J.E."/>
            <person name="Ravel J."/>
            <person name="Cebula T.A."/>
        </authorList>
    </citation>
    <scope>NUCLEOTIDE SEQUENCE [LARGE SCALE GENOMIC DNA]</scope>
    <source>
        <strain>EC4115 / EHEC</strain>
    </source>
</reference>
<proteinExistence type="inferred from homology"/>
<name>YNFB_ECO5E</name>
<gene>
    <name evidence="1" type="primary">ynfB</name>
    <name type="ordered locus">ECH74115_2292</name>
</gene>